<proteinExistence type="evidence at protein level"/>
<protein>
    <recommendedName>
        <fullName evidence="8">Protein NARROW LEAF 1</fullName>
    </recommendedName>
    <alternativeName>
        <fullName evidence="10">Protein GREEN FOR PHOTOSYNTHESIS</fullName>
    </alternativeName>
    <alternativeName>
        <fullName evidence="13">Protein QUANTITATIVE TRAIT LOCUS FOR FLAG LEAF WIDTH 4</fullName>
        <shortName evidence="9">qFLW4</shortName>
    </alternativeName>
    <alternativeName>
        <fullName evidence="11">Protein SPIKELET NUMBER</fullName>
    </alternativeName>
</protein>
<accession>B4XT64</accession>
<accession>A0A0P0WF43</accession>
<accession>Q0JA57</accession>
<reference key="1">
    <citation type="journal article" date="2008" name="Plant Physiol.">
        <title>Mutation of the rice Narrow leaf1 gene, which encodes a novel protein, affects vein patterning and polar auxin transport.</title>
        <authorList>
            <person name="Qi J."/>
            <person name="Qian Q."/>
            <person name="Bu Q."/>
            <person name="Li S."/>
            <person name="Chen Q."/>
            <person name="Sun J."/>
            <person name="Liang W."/>
            <person name="Zhou Y."/>
            <person name="Chu C."/>
            <person name="Li X."/>
            <person name="Ren F."/>
            <person name="Palme K."/>
            <person name="Zhao B."/>
            <person name="Chen J."/>
            <person name="Chen M."/>
            <person name="Li C."/>
        </authorList>
    </citation>
    <scope>NUCLEOTIDE SEQUENCE [MRNA]</scope>
    <scope>FUNCTION</scope>
    <scope>SUBCELLULAR LOCATION</scope>
    <scope>TISSUE SPECIFICITY</scope>
    <scope>DISRUPTION PHENOTYPE</scope>
</reference>
<reference key="2">
    <citation type="journal article" date="2002" name="Nature">
        <title>Sequence and analysis of rice chromosome 4.</title>
        <authorList>
            <person name="Feng Q."/>
            <person name="Zhang Y."/>
            <person name="Hao P."/>
            <person name="Wang S."/>
            <person name="Fu G."/>
            <person name="Huang Y."/>
            <person name="Li Y."/>
            <person name="Zhu J."/>
            <person name="Liu Y."/>
            <person name="Hu X."/>
            <person name="Jia P."/>
            <person name="Zhang Y."/>
            <person name="Zhao Q."/>
            <person name="Ying K."/>
            <person name="Yu S."/>
            <person name="Tang Y."/>
            <person name="Weng Q."/>
            <person name="Zhang L."/>
            <person name="Lu Y."/>
            <person name="Mu J."/>
            <person name="Lu Y."/>
            <person name="Zhang L.S."/>
            <person name="Yu Z."/>
            <person name="Fan D."/>
            <person name="Liu X."/>
            <person name="Lu T."/>
            <person name="Li C."/>
            <person name="Wu Y."/>
            <person name="Sun T."/>
            <person name="Lei H."/>
            <person name="Li T."/>
            <person name="Hu H."/>
            <person name="Guan J."/>
            <person name="Wu M."/>
            <person name="Zhang R."/>
            <person name="Zhou B."/>
            <person name="Chen Z."/>
            <person name="Chen L."/>
            <person name="Jin Z."/>
            <person name="Wang R."/>
            <person name="Yin H."/>
            <person name="Cai Z."/>
            <person name="Ren S."/>
            <person name="Lv G."/>
            <person name="Gu W."/>
            <person name="Zhu G."/>
            <person name="Tu Y."/>
            <person name="Jia J."/>
            <person name="Zhang Y."/>
            <person name="Chen J."/>
            <person name="Kang H."/>
            <person name="Chen X."/>
            <person name="Shao C."/>
            <person name="Sun Y."/>
            <person name="Hu Q."/>
            <person name="Zhang X."/>
            <person name="Zhang W."/>
            <person name="Wang L."/>
            <person name="Ding C."/>
            <person name="Sheng H."/>
            <person name="Gu J."/>
            <person name="Chen S."/>
            <person name="Ni L."/>
            <person name="Zhu F."/>
            <person name="Chen W."/>
            <person name="Lan L."/>
            <person name="Lai Y."/>
            <person name="Cheng Z."/>
            <person name="Gu M."/>
            <person name="Jiang J."/>
            <person name="Li J."/>
            <person name="Hong G."/>
            <person name="Xue Y."/>
            <person name="Han B."/>
        </authorList>
    </citation>
    <scope>NUCLEOTIDE SEQUENCE [LARGE SCALE GENOMIC DNA]</scope>
    <source>
        <strain>cv. Nipponbare</strain>
    </source>
</reference>
<reference key="3">
    <citation type="journal article" date="2005" name="Nature">
        <title>The map-based sequence of the rice genome.</title>
        <authorList>
            <consortium name="International rice genome sequencing project (IRGSP)"/>
        </authorList>
    </citation>
    <scope>NUCLEOTIDE SEQUENCE [LARGE SCALE GENOMIC DNA]</scope>
    <source>
        <strain>cv. Nipponbare</strain>
    </source>
</reference>
<reference key="4">
    <citation type="journal article" date="2008" name="Nucleic Acids Res.">
        <title>The rice annotation project database (RAP-DB): 2008 update.</title>
        <authorList>
            <consortium name="The rice annotation project (RAP)"/>
        </authorList>
    </citation>
    <scope>GENOME REANNOTATION</scope>
    <source>
        <strain>cv. Nipponbare</strain>
    </source>
</reference>
<reference key="5">
    <citation type="journal article" date="2013" name="Rice">
        <title>Improvement of the Oryza sativa Nipponbare reference genome using next generation sequence and optical map data.</title>
        <authorList>
            <person name="Kawahara Y."/>
            <person name="de la Bastide M."/>
            <person name="Hamilton J.P."/>
            <person name="Kanamori H."/>
            <person name="McCombie W.R."/>
            <person name="Ouyang S."/>
            <person name="Schwartz D.C."/>
            <person name="Tanaka T."/>
            <person name="Wu J."/>
            <person name="Zhou S."/>
            <person name="Childs K.L."/>
            <person name="Davidson R.M."/>
            <person name="Lin H."/>
            <person name="Quesada-Ocampo L."/>
            <person name="Vaillancourt B."/>
            <person name="Sakai H."/>
            <person name="Lee S.S."/>
            <person name="Kim J."/>
            <person name="Numa H."/>
            <person name="Itoh T."/>
            <person name="Buell C.R."/>
            <person name="Matsumoto T."/>
        </authorList>
    </citation>
    <scope>GENOME REANNOTATION</scope>
    <source>
        <strain>cv. Nipponbare</strain>
    </source>
</reference>
<reference key="6">
    <citation type="journal article" date="2005" name="PLoS Biol.">
        <title>The genomes of Oryza sativa: a history of duplications.</title>
        <authorList>
            <person name="Yu J."/>
            <person name="Wang J."/>
            <person name="Lin W."/>
            <person name="Li S."/>
            <person name="Li H."/>
            <person name="Zhou J."/>
            <person name="Ni P."/>
            <person name="Dong W."/>
            <person name="Hu S."/>
            <person name="Zeng C."/>
            <person name="Zhang J."/>
            <person name="Zhang Y."/>
            <person name="Li R."/>
            <person name="Xu Z."/>
            <person name="Li S."/>
            <person name="Li X."/>
            <person name="Zheng H."/>
            <person name="Cong L."/>
            <person name="Lin L."/>
            <person name="Yin J."/>
            <person name="Geng J."/>
            <person name="Li G."/>
            <person name="Shi J."/>
            <person name="Liu J."/>
            <person name="Lv H."/>
            <person name="Li J."/>
            <person name="Wang J."/>
            <person name="Deng Y."/>
            <person name="Ran L."/>
            <person name="Shi X."/>
            <person name="Wang X."/>
            <person name="Wu Q."/>
            <person name="Li C."/>
            <person name="Ren X."/>
            <person name="Wang J."/>
            <person name="Wang X."/>
            <person name="Li D."/>
            <person name="Liu D."/>
            <person name="Zhang X."/>
            <person name="Ji Z."/>
            <person name="Zhao W."/>
            <person name="Sun Y."/>
            <person name="Zhang Z."/>
            <person name="Bao J."/>
            <person name="Han Y."/>
            <person name="Dong L."/>
            <person name="Ji J."/>
            <person name="Chen P."/>
            <person name="Wu S."/>
            <person name="Liu J."/>
            <person name="Xiao Y."/>
            <person name="Bu D."/>
            <person name="Tan J."/>
            <person name="Yang L."/>
            <person name="Ye C."/>
            <person name="Zhang J."/>
            <person name="Xu J."/>
            <person name="Zhou Y."/>
            <person name="Yu Y."/>
            <person name="Zhang B."/>
            <person name="Zhuang S."/>
            <person name="Wei H."/>
            <person name="Liu B."/>
            <person name="Lei M."/>
            <person name="Yu H."/>
            <person name="Li Y."/>
            <person name="Xu H."/>
            <person name="Wei S."/>
            <person name="He X."/>
            <person name="Fang L."/>
            <person name="Zhang Z."/>
            <person name="Zhang Y."/>
            <person name="Huang X."/>
            <person name="Su Z."/>
            <person name="Tong W."/>
            <person name="Li J."/>
            <person name="Tong Z."/>
            <person name="Li S."/>
            <person name="Ye J."/>
            <person name="Wang L."/>
            <person name="Fang L."/>
            <person name="Lei T."/>
            <person name="Chen C.-S."/>
            <person name="Chen H.-C."/>
            <person name="Xu Z."/>
            <person name="Li H."/>
            <person name="Huang H."/>
            <person name="Zhang F."/>
            <person name="Xu H."/>
            <person name="Li N."/>
            <person name="Zhao C."/>
            <person name="Li S."/>
            <person name="Dong L."/>
            <person name="Huang Y."/>
            <person name="Li L."/>
            <person name="Xi Y."/>
            <person name="Qi Q."/>
            <person name="Li W."/>
            <person name="Zhang B."/>
            <person name="Hu W."/>
            <person name="Zhang Y."/>
            <person name="Tian X."/>
            <person name="Jiao Y."/>
            <person name="Liang X."/>
            <person name="Jin J."/>
            <person name="Gao L."/>
            <person name="Zheng W."/>
            <person name="Hao B."/>
            <person name="Liu S.-M."/>
            <person name="Wang W."/>
            <person name="Yuan L."/>
            <person name="Cao M."/>
            <person name="McDermott J."/>
            <person name="Samudrala R."/>
            <person name="Wang J."/>
            <person name="Wong G.K.-S."/>
            <person name="Yang H."/>
        </authorList>
    </citation>
    <scope>NUCLEOTIDE SEQUENCE [LARGE SCALE GENOMIC DNA]</scope>
    <source>
        <strain>cv. Nipponbare</strain>
    </source>
</reference>
<reference key="7">
    <citation type="journal article" date="2012" name="Plant Cell Rep.">
        <title>Fine mapping of a major QTL for flag leaf width in rice, qFLW4, which might be caused by alternative splicing of NAL1.</title>
        <authorList>
            <person name="Chen M."/>
            <person name="Luo J."/>
            <person name="Shao G."/>
            <person name="Wei X."/>
            <person name="Tang S."/>
            <person name="Sheng Z."/>
            <person name="Song J."/>
            <person name="Hu P."/>
        </authorList>
    </citation>
    <scope>FUNCTION</scope>
</reference>
<reference key="8">
    <citation type="journal article" date="2013" name="Sci. Rep.">
        <title>A natural variant of NAL1, selected in high-yield rice breeding programs, pleiotropically increases photosynthesis rate.</title>
        <authorList>
            <person name="Takai T."/>
            <person name="Adachi S."/>
            <person name="Taguchi-Shiobara F."/>
            <person name="Sanoh-Arai Y."/>
            <person name="Iwasawa N."/>
            <person name="Yoshinaga S."/>
            <person name="Hirose S."/>
            <person name="Taniguchi Y."/>
            <person name="Yamanouchi U."/>
            <person name="Wu J."/>
            <person name="Matsumoto T."/>
            <person name="Sugimoto K."/>
            <person name="Kondo K."/>
            <person name="Ikka T."/>
            <person name="Ando T."/>
            <person name="Kono I."/>
            <person name="Ito S."/>
            <person name="Shomura A."/>
            <person name="Ookawa T."/>
            <person name="Hirasawa T."/>
            <person name="Yano M."/>
            <person name="Kondo M."/>
            <person name="Yamamoto T."/>
        </authorList>
    </citation>
    <scope>FUNCTION</scope>
    <scope>BIOTECHNOLOGY</scope>
    <scope>POLYMORPHISM</scope>
</reference>
<reference key="9">
    <citation type="journal article" date="2013" name="Proc. Natl. Acad. Sci. U.S.A.">
        <title>NAL1 allele from a rice landrace greatly increases yield in modern indica cultivars.</title>
        <authorList>
            <person name="Fujita D."/>
            <person name="Trijatmiko K.R."/>
            <person name="Tagle A.G."/>
            <person name="Sapasap M.V."/>
            <person name="Koide Y."/>
            <person name="Sasaki K."/>
            <person name="Tsakirpaloglou N."/>
            <person name="Gannaban R.B."/>
            <person name="Nishimura T."/>
            <person name="Yanagihara S."/>
            <person name="Fukuta Y."/>
            <person name="Koshiba T."/>
            <person name="Slamet-Loedin I.H."/>
            <person name="Ishimaru T."/>
            <person name="Kobayashi N."/>
        </authorList>
    </citation>
    <scope>FUNCTION</scope>
    <scope>BIOTECHNOLOGY</scope>
    <scope>MUTAGENESIS OF HIS-233; VAL-475 AND ILE-484</scope>
</reference>
<reference key="10">
    <citation type="journal article" date="2014" name="Mol. Plant">
        <title>LSCHL4 from japonica cultivar, which is allelic to NAL1, increases yield of indica super rice 93-11.</title>
        <authorList>
            <person name="Zhang G.H."/>
            <person name="Li S.Y."/>
            <person name="Wang L."/>
            <person name="Ye W.J."/>
            <person name="Zeng D.L."/>
            <person name="Rao Y.C."/>
            <person name="Peng Y.L."/>
            <person name="Hu J."/>
            <person name="Yang Y.L."/>
            <person name="Xu J."/>
            <person name="Ren D.Y."/>
            <person name="Gao Z.Y."/>
            <person name="Zhu L."/>
            <person name="Dong G.J."/>
            <person name="Hu X.M."/>
            <person name="Yan M.X."/>
            <person name="Guo L.B."/>
            <person name="Li C.Y."/>
            <person name="Qian Q."/>
        </authorList>
    </citation>
    <scope>FUNCTION</scope>
    <scope>BIOTECHNOLOGY</scope>
    <scope>MUTAGENESIS OF HIS-233; VAL-475 AND ILE-484</scope>
</reference>
<evidence type="ECO:0000255" key="1"/>
<evidence type="ECO:0000256" key="2">
    <source>
        <dbReference type="SAM" id="MobiDB-lite"/>
    </source>
</evidence>
<evidence type="ECO:0000269" key="3">
    <source>
    </source>
</evidence>
<evidence type="ECO:0000269" key="4">
    <source>
    </source>
</evidence>
<evidence type="ECO:0000269" key="5">
    <source>
    </source>
</evidence>
<evidence type="ECO:0000269" key="6">
    <source>
    </source>
</evidence>
<evidence type="ECO:0000269" key="7">
    <source>
    </source>
</evidence>
<evidence type="ECO:0000303" key="8">
    <source>
    </source>
</evidence>
<evidence type="ECO:0000303" key="9">
    <source>
    </source>
</evidence>
<evidence type="ECO:0000303" key="10">
    <source>
    </source>
</evidence>
<evidence type="ECO:0000303" key="11">
    <source>
    </source>
</evidence>
<evidence type="ECO:0000303" key="12">
    <source>
    </source>
</evidence>
<evidence type="ECO:0000305" key="13"/>
<evidence type="ECO:0000312" key="14">
    <source>
        <dbReference type="EMBL" id="BAF15780.1"/>
    </source>
</evidence>
<evidence type="ECO:0000312" key="15">
    <source>
        <dbReference type="EMBL" id="EEE61678.1"/>
    </source>
</evidence>
<evidence type="ECO:0007829" key="16">
    <source>
        <dbReference type="PDB" id="7Y77"/>
    </source>
</evidence>
<dbReference type="EMBL" id="EU093963">
    <property type="protein sequence ID" value="ABW89000.1"/>
    <property type="molecule type" value="mRNA"/>
</dbReference>
<dbReference type="EMBL" id="AP008210">
    <property type="protein sequence ID" value="BAF15780.1"/>
    <property type="status" value="ALT_SEQ"/>
    <property type="molecule type" value="Genomic_DNA"/>
</dbReference>
<dbReference type="EMBL" id="AP014960">
    <property type="protein sequence ID" value="BAS90996.1"/>
    <property type="status" value="ALT_SEQ"/>
    <property type="molecule type" value="Genomic_DNA"/>
</dbReference>
<dbReference type="EMBL" id="CM000141">
    <property type="protein sequence ID" value="EEE61678.1"/>
    <property type="molecule type" value="Genomic_DNA"/>
</dbReference>
<dbReference type="RefSeq" id="NP_001406793.1">
    <property type="nucleotide sequence ID" value="NM_001419864.1"/>
</dbReference>
<dbReference type="RefSeq" id="XP_015635854.1">
    <property type="nucleotide sequence ID" value="XM_015780368.1"/>
</dbReference>
<dbReference type="RefSeq" id="XP_015635855.1">
    <property type="nucleotide sequence ID" value="XM_015780369.1"/>
</dbReference>
<dbReference type="RefSeq" id="XP_015635856.1">
    <property type="nucleotide sequence ID" value="XM_015780370.1"/>
</dbReference>
<dbReference type="RefSeq" id="XP_015635857.1">
    <property type="nucleotide sequence ID" value="XM_015780371.1"/>
</dbReference>
<dbReference type="RefSeq" id="XP_015635858.1">
    <property type="nucleotide sequence ID" value="XM_015780372.1"/>
</dbReference>
<dbReference type="RefSeq" id="XP_066165287.1">
    <property type="nucleotide sequence ID" value="XM_066309190.1"/>
</dbReference>
<dbReference type="RefSeq" id="XP_066165288.1">
    <property type="nucleotide sequence ID" value="XM_066309191.1"/>
</dbReference>
<dbReference type="RefSeq" id="XP_066165289.1">
    <property type="nucleotide sequence ID" value="XM_066309192.1"/>
</dbReference>
<dbReference type="RefSeq" id="XP_066165290.1">
    <property type="nucleotide sequence ID" value="XM_066309193.1"/>
</dbReference>
<dbReference type="RefSeq" id="XP_066165291.1">
    <property type="nucleotide sequence ID" value="XM_066309194.1"/>
</dbReference>
<dbReference type="PDB" id="7Y77">
    <property type="method" value="X-ray"/>
    <property type="resolution" value="2.60 A"/>
    <property type="chains" value="A/B/C=59-463"/>
</dbReference>
<dbReference type="PDB" id="8HAS">
    <property type="method" value="EM"/>
    <property type="resolution" value="2.89 A"/>
    <property type="chains" value="A/B/C/D/E/F=1-582"/>
</dbReference>
<dbReference type="PDB" id="8HAT">
    <property type="method" value="EM"/>
    <property type="resolution" value="3.03 A"/>
    <property type="chains" value="A/B/C/D/E/F=47-455"/>
</dbReference>
<dbReference type="PDB" id="8PMG">
    <property type="method" value="X-ray"/>
    <property type="resolution" value="3.29 A"/>
    <property type="chains" value="A/B/C/D/E/F=36-458"/>
</dbReference>
<dbReference type="PDB" id="8PMI">
    <property type="method" value="X-ray"/>
    <property type="resolution" value="2.83 A"/>
    <property type="chains" value="A/B/C/D/E/F=36-458"/>
</dbReference>
<dbReference type="PDB" id="8PML">
    <property type="method" value="X-ray"/>
    <property type="resolution" value="2.95 A"/>
    <property type="chains" value="A/B/C/D/E/F=46-458"/>
</dbReference>
<dbReference type="PDB" id="8PMM">
    <property type="method" value="X-ray"/>
    <property type="resolution" value="1.75 A"/>
    <property type="chains" value="A/B/C=26-458"/>
</dbReference>
<dbReference type="PDB" id="8PN1">
    <property type="method" value="EM"/>
    <property type="resolution" value="2.40 A"/>
    <property type="chains" value="A/B/C/D/E/F=26-458"/>
</dbReference>
<dbReference type="PDB" id="8PN2">
    <property type="method" value="EM"/>
    <property type="resolution" value="2.63 A"/>
    <property type="chains" value="A/B/C/D/E/F=1-582"/>
</dbReference>
<dbReference type="PDBsum" id="7Y77"/>
<dbReference type="PDBsum" id="8HAS"/>
<dbReference type="PDBsum" id="8HAT"/>
<dbReference type="PDBsum" id="8PMG"/>
<dbReference type="PDBsum" id="8PMI"/>
<dbReference type="PDBsum" id="8PML"/>
<dbReference type="PDBsum" id="8PMM"/>
<dbReference type="PDBsum" id="8PN1"/>
<dbReference type="PDBsum" id="8PN2"/>
<dbReference type="EMDB" id="EMD-17766"/>
<dbReference type="EMDB" id="EMD-17768"/>
<dbReference type="EMDB" id="EMD-34607"/>
<dbReference type="EMDB" id="EMD-34608"/>
<dbReference type="SMR" id="B4XT64"/>
<dbReference type="FunCoup" id="B4XT64">
    <property type="interactions" value="304"/>
</dbReference>
<dbReference type="STRING" id="39947.B4XT64"/>
<dbReference type="PaxDb" id="39947-B4XT64"/>
<dbReference type="EnsemblPlants" id="Os04t0615000-01">
    <property type="protein sequence ID" value="Os04t0615000-01"/>
    <property type="gene ID" value="Os04g0615000"/>
</dbReference>
<dbReference type="GeneID" id="4336986"/>
<dbReference type="Gramene" id="Os04t0615000-01">
    <property type="protein sequence ID" value="Os04t0615000-01"/>
    <property type="gene ID" value="Os04g0615000"/>
</dbReference>
<dbReference type="KEGG" id="dosa:Os04g0615000"/>
<dbReference type="eggNOG" id="ENOG502QQZI">
    <property type="taxonomic scope" value="Eukaryota"/>
</dbReference>
<dbReference type="InParanoid" id="B4XT64"/>
<dbReference type="OrthoDB" id="1881052at2759"/>
<dbReference type="Proteomes" id="UP000000763">
    <property type="component" value="Chromosome 4"/>
</dbReference>
<dbReference type="Proteomes" id="UP000007752">
    <property type="component" value="Chromosome 4"/>
</dbReference>
<dbReference type="Proteomes" id="UP000059680">
    <property type="component" value="Chromosome 4"/>
</dbReference>
<dbReference type="GO" id="GO:0005737">
    <property type="term" value="C:cytoplasm"/>
    <property type="evidence" value="ECO:0000314"/>
    <property type="project" value="UniProtKB"/>
</dbReference>
<dbReference type="GO" id="GO:0005654">
    <property type="term" value="C:nucleoplasm"/>
    <property type="evidence" value="ECO:0000314"/>
    <property type="project" value="UniProtKB"/>
</dbReference>
<dbReference type="GO" id="GO:0080006">
    <property type="term" value="P:internode patterning"/>
    <property type="evidence" value="ECO:0000315"/>
    <property type="project" value="UniProtKB"/>
</dbReference>
<dbReference type="GO" id="GO:0010305">
    <property type="term" value="P:leaf vascular tissue pattern formation"/>
    <property type="evidence" value="ECO:0000315"/>
    <property type="project" value="UniProtKB"/>
</dbReference>
<dbReference type="GO" id="GO:2000024">
    <property type="term" value="P:regulation of leaf development"/>
    <property type="evidence" value="ECO:0000315"/>
    <property type="project" value="UniProtKB"/>
</dbReference>
<dbReference type="GO" id="GO:0010222">
    <property type="term" value="P:stem vascular tissue pattern formation"/>
    <property type="evidence" value="ECO:0000315"/>
    <property type="project" value="UniProtKB"/>
</dbReference>
<dbReference type="InterPro" id="IPR009003">
    <property type="entry name" value="Peptidase_S1_PA"/>
</dbReference>
<dbReference type="PANTHER" id="PTHR31521">
    <property type="entry name" value="EXPRESSED PROTEIN"/>
    <property type="match status" value="1"/>
</dbReference>
<dbReference type="PANTHER" id="PTHR31521:SF4">
    <property type="entry name" value="PROTEIN NARROW LEAF 1"/>
    <property type="match status" value="1"/>
</dbReference>
<dbReference type="SUPFAM" id="SSF50494">
    <property type="entry name" value="Trypsin-like serine proteases"/>
    <property type="match status" value="1"/>
</dbReference>
<feature type="chain" id="PRO_0000445264" description="Protein NARROW LEAF 1">
    <location>
        <begin position="1"/>
        <end position="582"/>
    </location>
</feature>
<feature type="region of interest" description="Disordered" evidence="2">
    <location>
        <begin position="1"/>
        <end position="26"/>
    </location>
</feature>
<feature type="region of interest" description="Disordered" evidence="2">
    <location>
        <begin position="531"/>
        <end position="582"/>
    </location>
</feature>
<feature type="short sequence motif" description="Nuclear localization signal" evidence="1">
    <location>
        <begin position="567"/>
        <end position="573"/>
    </location>
</feature>
<feature type="compositionally biased region" description="Basic and acidic residues" evidence="2">
    <location>
        <begin position="562"/>
        <end position="572"/>
    </location>
</feature>
<feature type="compositionally biased region" description="Low complexity" evidence="2">
    <location>
        <begin position="573"/>
        <end position="582"/>
    </location>
</feature>
<feature type="mutagenesis site" description="Reduced grain yield; when associated with A-475 and V-484." evidence="6 7">
    <original>H</original>
    <variation>R</variation>
    <location>
        <position position="233"/>
    </location>
</feature>
<feature type="mutagenesis site" description="Reduced grain yield; when associated with R-233 and V-484." evidence="6 7">
    <original>V</original>
    <variation>A</variation>
    <location>
        <position position="475"/>
    </location>
</feature>
<feature type="mutagenesis site" description="Reduced grain yield; when associated with R-233 and A-475." evidence="6 7">
    <original>I</original>
    <variation>V</variation>
    <location>
        <position position="484"/>
    </location>
</feature>
<feature type="helix" evidence="16">
    <location>
        <begin position="62"/>
        <end position="75"/>
    </location>
</feature>
<feature type="helix" evidence="16">
    <location>
        <begin position="94"/>
        <end position="103"/>
    </location>
</feature>
<feature type="helix" evidence="16">
    <location>
        <begin position="105"/>
        <end position="109"/>
    </location>
</feature>
<feature type="strand" evidence="16">
    <location>
        <begin position="113"/>
        <end position="122"/>
    </location>
</feature>
<feature type="strand" evidence="16">
    <location>
        <begin position="125"/>
        <end position="138"/>
    </location>
</feature>
<feature type="helix" evidence="16">
    <location>
        <begin position="142"/>
        <end position="144"/>
    </location>
</feature>
<feature type="turn" evidence="16">
    <location>
        <begin position="147"/>
        <end position="149"/>
    </location>
</feature>
<feature type="strand" evidence="16">
    <location>
        <begin position="153"/>
        <end position="156"/>
    </location>
</feature>
<feature type="strand" evidence="16">
    <location>
        <begin position="162"/>
        <end position="171"/>
    </location>
</feature>
<feature type="helix" evidence="16">
    <location>
        <begin position="187"/>
        <end position="192"/>
    </location>
</feature>
<feature type="turn" evidence="16">
    <location>
        <begin position="193"/>
        <end position="195"/>
    </location>
</feature>
<feature type="strand" evidence="16">
    <location>
        <begin position="196"/>
        <end position="199"/>
    </location>
</feature>
<feature type="strand" evidence="16">
    <location>
        <begin position="204"/>
        <end position="206"/>
    </location>
</feature>
<feature type="strand" evidence="16">
    <location>
        <begin position="211"/>
        <end position="213"/>
    </location>
</feature>
<feature type="strand" evidence="16">
    <location>
        <begin position="216"/>
        <end position="222"/>
    </location>
</feature>
<feature type="strand" evidence="16">
    <location>
        <begin position="227"/>
        <end position="231"/>
    </location>
</feature>
<feature type="helix" evidence="16">
    <location>
        <begin position="233"/>
        <end position="236"/>
    </location>
</feature>
<feature type="strand" evidence="16">
    <location>
        <begin position="245"/>
        <end position="249"/>
    </location>
</feature>
<feature type="turn" evidence="16">
    <location>
        <begin position="252"/>
        <end position="254"/>
    </location>
</feature>
<feature type="strand" evidence="16">
    <location>
        <begin position="257"/>
        <end position="262"/>
    </location>
</feature>
<feature type="strand" evidence="16">
    <location>
        <begin position="265"/>
        <end position="271"/>
    </location>
</feature>
<feature type="helix" evidence="16">
    <location>
        <begin position="272"/>
        <end position="275"/>
    </location>
</feature>
<feature type="strand" evidence="16">
    <location>
        <begin position="284"/>
        <end position="297"/>
    </location>
</feature>
<feature type="helix" evidence="16">
    <location>
        <begin position="303"/>
        <end position="305"/>
    </location>
</feature>
<feature type="turn" evidence="16">
    <location>
        <begin position="311"/>
        <end position="313"/>
    </location>
</feature>
<feature type="helix" evidence="16">
    <location>
        <begin position="328"/>
        <end position="330"/>
    </location>
</feature>
<feature type="turn" evidence="16">
    <location>
        <begin position="331"/>
        <end position="333"/>
    </location>
</feature>
<feature type="strand" evidence="16">
    <location>
        <begin position="335"/>
        <end position="340"/>
    </location>
</feature>
<feature type="turn" evidence="16">
    <location>
        <begin position="341"/>
        <end position="343"/>
    </location>
</feature>
<feature type="strand" evidence="16">
    <location>
        <begin position="344"/>
        <end position="358"/>
    </location>
</feature>
<feature type="strand" evidence="16">
    <location>
        <begin position="360"/>
        <end position="362"/>
    </location>
</feature>
<feature type="strand" evidence="16">
    <location>
        <begin position="364"/>
        <end position="373"/>
    </location>
</feature>
<feature type="helix" evidence="16">
    <location>
        <begin position="374"/>
        <end position="376"/>
    </location>
</feature>
<feature type="strand" evidence="16">
    <location>
        <begin position="388"/>
        <end position="391"/>
    </location>
</feature>
<feature type="strand" evidence="16">
    <location>
        <begin position="394"/>
        <end position="396"/>
    </location>
</feature>
<feature type="strand" evidence="16">
    <location>
        <begin position="401"/>
        <end position="405"/>
    </location>
</feature>
<feature type="strand" evidence="16">
    <location>
        <begin position="414"/>
        <end position="416"/>
    </location>
</feature>
<feature type="strand" evidence="16">
    <location>
        <begin position="419"/>
        <end position="421"/>
    </location>
</feature>
<feature type="strand" evidence="16">
    <location>
        <begin position="424"/>
        <end position="431"/>
    </location>
</feature>
<feature type="helix" evidence="16">
    <location>
        <begin position="432"/>
        <end position="439"/>
    </location>
</feature>
<feature type="strand" evidence="16">
    <location>
        <begin position="441"/>
        <end position="443"/>
    </location>
</feature>
<feature type="helix" evidence="16">
    <location>
        <begin position="447"/>
        <end position="458"/>
    </location>
</feature>
<sequence length="582" mass="63252">MKPSDDKAQLSGLAQSEESSLDVDHQSFPCSPSIQPVASGCTHTENSAAYFLWPTSNLQHCAAEGRANYFGNLQKGLLPRHPGRLPKGQQANSLLDLMTIRAFHSKILRRFSLGTAVGFRIRKGDLTDIPAILVFVARKVHKKWLNPAQCLPAILEGPGGVWCDVDVVEFSYYGAPAQTPKEQMFSELVDKLCGSDECIGSGSQVASHETFGTLGAIVKRRTGNKQVGFLTNHHVAVDLDYPNQKMFHPLPPNLGPGVYLGAVERATSFITDDVWYGIYAGTNPETFVRADGAFIPFADDFDISTVTTVVRGVGDIGDVKVIDLQCPLNSLIGRQVCKVGRSSGHTTGTVMAYALEYNDEKGICFFTDILVVGENRQTFDLEGDSGSLIILTSQDGEKPRPIGIIWGGTANRGRLKLTSDHGPENWTSGVDLGRLLDRLELDIIITNESLQDAVQQQRFALVAAVTSAVGESSGVPVAIPEEKIEEIFEPLGIQIQQLPRHDVAASGTEGEEASNTVVNVEEHQFISNFVGMSPVRDDQDAPRSITNLNNPSEEELAMSLHLGDREPKRLRSDSGSSLDLEK</sequence>
<gene>
    <name evidence="8" type="primary">NAL1</name>
    <name evidence="10" type="synonym">GFP</name>
    <name evidence="12" type="synonym">LSCHL4</name>
    <name evidence="11" type="synonym">SPIKE</name>
    <name evidence="14" type="ordered locus">Os04g0615000</name>
    <name evidence="13" type="ordered locus">LOC_Os04g52479</name>
    <name evidence="15" type="ORF">OsJ_16147</name>
</gene>
<name>NAL1_ORYSJ</name>
<organism>
    <name type="scientific">Oryza sativa subsp. japonica</name>
    <name type="common">Rice</name>
    <dbReference type="NCBI Taxonomy" id="39947"/>
    <lineage>
        <taxon>Eukaryota</taxon>
        <taxon>Viridiplantae</taxon>
        <taxon>Streptophyta</taxon>
        <taxon>Embryophyta</taxon>
        <taxon>Tracheophyta</taxon>
        <taxon>Spermatophyta</taxon>
        <taxon>Magnoliopsida</taxon>
        <taxon>Liliopsida</taxon>
        <taxon>Poales</taxon>
        <taxon>Poaceae</taxon>
        <taxon>BOP clade</taxon>
        <taxon>Oryzoideae</taxon>
        <taxon>Oryzeae</taxon>
        <taxon>Oryzinae</taxon>
        <taxon>Oryza</taxon>
        <taxon>Oryza sativa</taxon>
    </lineage>
</organism>
<keyword id="KW-0002">3D-structure</keyword>
<keyword id="KW-0963">Cytoplasm</keyword>
<keyword id="KW-0217">Developmental protein</keyword>
<keyword id="KW-0539">Nucleus</keyword>
<keyword id="KW-1185">Reference proteome</keyword>
<comment type="function">
    <text evidence="3 4 5 6 7">Involved in the regulation of lateral leaf growth (PubMed:18562767, PubMed:22179305, PubMed:23985993). May be involved in the regulation of basipetal polar auxin transport (PAT) and vascular patterning in leaves (PubMed:18562767). Controls photosynthesis rate by regulating carboxylation efficiency and consequently photosynthesis rate (PubMed:23985993). Controls panicle and spikelet numbers, and grain yield (PubMed:23985993, PubMed:24297875, PubMed:24795339).</text>
</comment>
<comment type="subcellular location">
    <subcellularLocation>
        <location evidence="3">Nucleus</location>
        <location evidence="3">Nucleoplasm</location>
    </subcellularLocation>
    <subcellularLocation>
        <location evidence="3">Cytoplasm</location>
    </subcellularLocation>
    <text evidence="3">Expressed in discrete structures which appeared similar to nuclear protein bodies.</text>
</comment>
<comment type="tissue specificity">
    <text evidence="3">Expressed in leaf sheaths, leaf blades, culms and panicles (PubMed:18562767). Preferentially expressed in vascular tissues in leaves and culms (PubMed:18562767).</text>
</comment>
<comment type="polymorphism">
    <text evidence="5">A partial loss-of-function allele of NAL1 is associated with high photosynthesis rate, high number of spikelets and high grain yield.</text>
</comment>
<comment type="disruption phenotype">
    <text evidence="3">Narrow leaf phenotype (PubMed:18562767). Reduced leaf blade width and plant height (PubMed:18562767). Altered internode elongation pattern (PubMed:18562767). Altered vascular patterns in leaves and culms (PubMed:18562767).</text>
</comment>
<comment type="biotechnology">
    <text evidence="5 6 7">Utilization of photosynthesis-related QTLs can enhance high-yield breeding and provide a new strategy for achieving increased rice productivity.</text>
</comment>
<comment type="sequence caution" evidence="13">
    <conflict type="erroneous gene model prediction">
        <sequence resource="EMBL-CDS" id="BAF15780"/>
    </conflict>
</comment>
<comment type="sequence caution" evidence="13">
    <conflict type="erroneous gene model prediction">
        <sequence resource="EMBL-CDS" id="BAS90996"/>
    </conflict>
</comment>